<accession>Q9UIF3</accession>
<accession>A6NIS6</accession>
<accession>O60638</accession>
<dbReference type="EMBL" id="AF054910">
    <property type="protein sequence ID" value="AAC09343.1"/>
    <property type="molecule type" value="mRNA"/>
</dbReference>
<dbReference type="EMBL" id="AB033823">
    <property type="protein sequence ID" value="BAA89350.1"/>
    <property type="molecule type" value="mRNA"/>
</dbReference>
<dbReference type="EMBL" id="AL138787">
    <property type="status" value="NOT_ANNOTATED_CDS"/>
    <property type="molecule type" value="Genomic_DNA"/>
</dbReference>
<dbReference type="EMBL" id="CH471059">
    <property type="protein sequence ID" value="EAX07392.1"/>
    <property type="molecule type" value="Genomic_DNA"/>
</dbReference>
<dbReference type="EMBL" id="BC035620">
    <property type="protein sequence ID" value="AAH35620.1"/>
    <property type="molecule type" value="mRNA"/>
</dbReference>
<dbReference type="CCDS" id="CCDS401.1"/>
<dbReference type="RefSeq" id="NP_055281.2">
    <property type="nucleotide sequence ID" value="NM_014466.2"/>
</dbReference>
<dbReference type="RefSeq" id="XP_005270810.1">
    <property type="nucleotide sequence ID" value="XM_005270753.3"/>
</dbReference>
<dbReference type="RefSeq" id="XP_011539560.1">
    <property type="nucleotide sequence ID" value="XM_011541258.4"/>
</dbReference>
<dbReference type="RefSeq" id="XP_016856544.1">
    <property type="nucleotide sequence ID" value="XM_017001055.2"/>
</dbReference>
<dbReference type="RefSeq" id="XP_054192024.1">
    <property type="nucleotide sequence ID" value="XM_054336049.1"/>
</dbReference>
<dbReference type="RefSeq" id="XP_054192025.1">
    <property type="nucleotide sequence ID" value="XM_054336050.1"/>
</dbReference>
<dbReference type="RefSeq" id="XP_054192026.1">
    <property type="nucleotide sequence ID" value="XM_054336051.1"/>
</dbReference>
<dbReference type="PDB" id="7UNG">
    <property type="method" value="EM"/>
    <property type="resolution" value="3.60 A"/>
    <property type="chains" value="B0/B1/B2/B3/B4/B5/B6/B7/B8/B9=1-430"/>
</dbReference>
<dbReference type="PDB" id="8J07">
    <property type="method" value="EM"/>
    <property type="resolution" value="4.10 A"/>
    <property type="chains" value="8J/8K/8L/8M/8N/8O/8P/8Q=1-430"/>
</dbReference>
<dbReference type="PDBsum" id="7UNG"/>
<dbReference type="PDBsum" id="8J07"/>
<dbReference type="EMDB" id="EMD-26624"/>
<dbReference type="EMDB" id="EMD-35888"/>
<dbReference type="SMR" id="Q9UIF3"/>
<dbReference type="BioGRID" id="118109">
    <property type="interactions" value="22"/>
</dbReference>
<dbReference type="FunCoup" id="Q9UIF3">
    <property type="interactions" value="98"/>
</dbReference>
<dbReference type="IntAct" id="Q9UIF3">
    <property type="interactions" value="17"/>
</dbReference>
<dbReference type="STRING" id="9606.ENSP00000207457"/>
<dbReference type="iPTMnet" id="Q9UIF3"/>
<dbReference type="PhosphoSitePlus" id="Q9UIF3"/>
<dbReference type="BioMuta" id="TEKT2"/>
<dbReference type="DMDM" id="25009466"/>
<dbReference type="MassIVE" id="Q9UIF3"/>
<dbReference type="PaxDb" id="9606-ENSP00000207457"/>
<dbReference type="PeptideAtlas" id="Q9UIF3"/>
<dbReference type="ProteomicsDB" id="84499"/>
<dbReference type="Antibodypedia" id="17404">
    <property type="antibodies" value="148 antibodies from 22 providers"/>
</dbReference>
<dbReference type="DNASU" id="27285"/>
<dbReference type="Ensembl" id="ENST00000207457.8">
    <property type="protein sequence ID" value="ENSP00000207457.3"/>
    <property type="gene ID" value="ENSG00000092850.12"/>
</dbReference>
<dbReference type="GeneID" id="27285"/>
<dbReference type="KEGG" id="hsa:27285"/>
<dbReference type="MANE-Select" id="ENST00000207457.8">
    <property type="protein sequence ID" value="ENSP00000207457.3"/>
    <property type="RefSeq nucleotide sequence ID" value="NM_014466.3"/>
    <property type="RefSeq protein sequence ID" value="NP_055281.2"/>
</dbReference>
<dbReference type="UCSC" id="uc001bzr.3">
    <property type="organism name" value="human"/>
</dbReference>
<dbReference type="AGR" id="HGNC:11725"/>
<dbReference type="CTD" id="27285"/>
<dbReference type="DisGeNET" id="27285"/>
<dbReference type="GeneCards" id="TEKT2"/>
<dbReference type="HGNC" id="HGNC:11725">
    <property type="gene designation" value="TEKT2"/>
</dbReference>
<dbReference type="HPA" id="ENSG00000092850">
    <property type="expression patterns" value="Group enriched (choroid plexus, fallopian tube, testis)"/>
</dbReference>
<dbReference type="MIM" id="608953">
    <property type="type" value="gene"/>
</dbReference>
<dbReference type="neXtProt" id="NX_Q9UIF3"/>
<dbReference type="OpenTargets" id="ENSG00000092850"/>
<dbReference type="PharmGKB" id="PA36442"/>
<dbReference type="VEuPathDB" id="HostDB:ENSG00000092850"/>
<dbReference type="eggNOG" id="KOG2685">
    <property type="taxonomic scope" value="Eukaryota"/>
</dbReference>
<dbReference type="GeneTree" id="ENSGT00950000182894"/>
<dbReference type="HOGENOM" id="CLU_033588_0_0_1"/>
<dbReference type="InParanoid" id="Q9UIF3"/>
<dbReference type="OMA" id="FDHRGKM"/>
<dbReference type="OrthoDB" id="440745at2759"/>
<dbReference type="PAN-GO" id="Q9UIF3">
    <property type="GO annotations" value="3 GO annotations based on evolutionary models"/>
</dbReference>
<dbReference type="PhylomeDB" id="Q9UIF3"/>
<dbReference type="TreeFam" id="TF320754"/>
<dbReference type="PathwayCommons" id="Q9UIF3"/>
<dbReference type="SignaLink" id="Q9UIF3"/>
<dbReference type="SIGNOR" id="Q9UIF3"/>
<dbReference type="BioGRID-ORCS" id="27285">
    <property type="hits" value="60 hits in 1146 CRISPR screens"/>
</dbReference>
<dbReference type="GenomeRNAi" id="27285"/>
<dbReference type="Pharos" id="Q9UIF3">
    <property type="development level" value="Tbio"/>
</dbReference>
<dbReference type="PRO" id="PR:Q9UIF3"/>
<dbReference type="Proteomes" id="UP000005640">
    <property type="component" value="Chromosome 1"/>
</dbReference>
<dbReference type="RNAct" id="Q9UIF3">
    <property type="molecule type" value="protein"/>
</dbReference>
<dbReference type="Bgee" id="ENSG00000092850">
    <property type="expression patterns" value="Expressed in right uterine tube and 90 other cell types or tissues"/>
</dbReference>
<dbReference type="ExpressionAtlas" id="Q9UIF3">
    <property type="expression patterns" value="baseline and differential"/>
</dbReference>
<dbReference type="GO" id="GO:0160111">
    <property type="term" value="C:axonemal A tubule inner sheath"/>
    <property type="evidence" value="ECO:0000250"/>
    <property type="project" value="UniProtKB"/>
</dbReference>
<dbReference type="GO" id="GO:0005879">
    <property type="term" value="C:axonemal microtubule"/>
    <property type="evidence" value="ECO:0000314"/>
    <property type="project" value="UniProtKB"/>
</dbReference>
<dbReference type="GO" id="GO:0015630">
    <property type="term" value="C:microtubule cytoskeleton"/>
    <property type="evidence" value="ECO:0000318"/>
    <property type="project" value="GO_Central"/>
</dbReference>
<dbReference type="GO" id="GO:0005815">
    <property type="term" value="C:microtubule organizing center"/>
    <property type="evidence" value="ECO:0000250"/>
    <property type="project" value="UniProtKB"/>
</dbReference>
<dbReference type="GO" id="GO:0005634">
    <property type="term" value="C:nucleus"/>
    <property type="evidence" value="ECO:0007005"/>
    <property type="project" value="UniProtKB"/>
</dbReference>
<dbReference type="GO" id="GO:0036126">
    <property type="term" value="C:sperm flagellum"/>
    <property type="evidence" value="ECO:0000250"/>
    <property type="project" value="UniProtKB"/>
</dbReference>
<dbReference type="GO" id="GO:0060271">
    <property type="term" value="P:cilium assembly"/>
    <property type="evidence" value="ECO:0000318"/>
    <property type="project" value="GO_Central"/>
</dbReference>
<dbReference type="GO" id="GO:0060294">
    <property type="term" value="P:cilium movement involved in cell motility"/>
    <property type="evidence" value="ECO:0000318"/>
    <property type="project" value="GO_Central"/>
</dbReference>
<dbReference type="GO" id="GO:0030317">
    <property type="term" value="P:flagellated sperm motility"/>
    <property type="evidence" value="ECO:0000250"/>
    <property type="project" value="UniProtKB"/>
</dbReference>
<dbReference type="GO" id="GO:0036159">
    <property type="term" value="P:inner dynein arm assembly"/>
    <property type="evidence" value="ECO:0007669"/>
    <property type="project" value="Ensembl"/>
</dbReference>
<dbReference type="InterPro" id="IPR048256">
    <property type="entry name" value="Tektin-like"/>
</dbReference>
<dbReference type="InterPro" id="IPR000435">
    <property type="entry name" value="Tektins"/>
</dbReference>
<dbReference type="PANTHER" id="PTHR19960">
    <property type="entry name" value="TEKTIN"/>
    <property type="match status" value="1"/>
</dbReference>
<dbReference type="PANTHER" id="PTHR19960:SF29">
    <property type="entry name" value="TEKTIN-2"/>
    <property type="match status" value="1"/>
</dbReference>
<dbReference type="Pfam" id="PF03148">
    <property type="entry name" value="Tektin"/>
    <property type="match status" value="1"/>
</dbReference>
<dbReference type="PRINTS" id="PR00511">
    <property type="entry name" value="TEKTIN"/>
</dbReference>
<keyword id="KW-0002">3D-structure</keyword>
<keyword id="KW-0966">Cell projection</keyword>
<keyword id="KW-0969">Cilium</keyword>
<keyword id="KW-0970">Cilium biogenesis/degradation</keyword>
<keyword id="KW-0175">Coiled coil</keyword>
<keyword id="KW-0963">Cytoplasm</keyword>
<keyword id="KW-0206">Cytoskeleton</keyword>
<keyword id="KW-0903">Direct protein sequencing</keyword>
<keyword id="KW-0282">Flagellum</keyword>
<keyword id="KW-0493">Microtubule</keyword>
<keyword id="KW-0597">Phosphoprotein</keyword>
<keyword id="KW-1267">Proteomics identification</keyword>
<keyword id="KW-1185">Reference proteome</keyword>
<keyword id="KW-0832">Ubl conjugation</keyword>
<organism>
    <name type="scientific">Homo sapiens</name>
    <name type="common">Human</name>
    <dbReference type="NCBI Taxonomy" id="9606"/>
    <lineage>
        <taxon>Eukaryota</taxon>
        <taxon>Metazoa</taxon>
        <taxon>Chordata</taxon>
        <taxon>Craniata</taxon>
        <taxon>Vertebrata</taxon>
        <taxon>Euteleostomi</taxon>
        <taxon>Mammalia</taxon>
        <taxon>Eutheria</taxon>
        <taxon>Euarchontoglires</taxon>
        <taxon>Primates</taxon>
        <taxon>Haplorrhini</taxon>
        <taxon>Catarrhini</taxon>
        <taxon>Hominidae</taxon>
        <taxon>Homo</taxon>
    </lineage>
</organism>
<sequence>MATLSVKPSRRFQLPDWHTNSYLLSTNAQLQRDASHQIRQEARVLRNETNNQTIWDEHDNRTRLVERIDTVNRWKEMLDKCLTDLDAEIDALTQMKESAEQNLQAKNLPLDVAIECLTLRESRRDIDVVKDPVEDELHKEVEVIEATKKALQQKVSQAFEQLCLLQEVQQQLNSDHRGKMETLEIDRGCLSLNLRSPNISLKVDPTRVPDGSTTLQQWDDFSRFNKDRAEAEMKAATELREATALTIAETNNELEAQRVATEFAFRKRLREMEKVYSELKWQEKNTLEEIAELQEDIRHLEEDLRTKLLSLKLSHTRLEARTYRPNVELCRDQAQYGLTDEVHQLEATIAALKQKLAQAQDALDALCKHLARLQADIACKANSMLLDTKCMDTRRKLTVPAERFVPEVDTFTRTTNSTLSPLKSCQLELA</sequence>
<evidence type="ECO:0000250" key="1">
    <source>
        <dbReference type="UniProtKB" id="Q1W6C3"/>
    </source>
</evidence>
<evidence type="ECO:0000250" key="2">
    <source>
        <dbReference type="UniProtKB" id="Q922G7"/>
    </source>
</evidence>
<evidence type="ECO:0000255" key="3"/>
<evidence type="ECO:0000269" key="4">
    <source>
    </source>
</evidence>
<evidence type="ECO:0000269" key="5">
    <source>
    </source>
</evidence>
<evidence type="ECO:0000305" key="6"/>
<evidence type="ECO:0000312" key="7">
    <source>
        <dbReference type="HGNC" id="HGNC:11725"/>
    </source>
</evidence>
<evidence type="ECO:0007744" key="8">
    <source>
        <dbReference type="PDB" id="7UNG"/>
    </source>
</evidence>
<reference key="1">
    <citation type="journal article" date="2002" name="Biol. Reprod.">
        <title>Tektin B1 demonstrates flagellar localization in human sperm.</title>
        <authorList>
            <person name="Wolkowicz M.J."/>
            <person name="Naaby-Hansen S."/>
            <person name="Gamble A.R."/>
            <person name="Reddi P.P."/>
            <person name="Flickinger C.J."/>
            <person name="Herr J.C."/>
        </authorList>
    </citation>
    <scope>NUCLEOTIDE SEQUENCE [MRNA]</scope>
    <scope>PROTEIN SEQUENCE OF 188-195; 259-266; 322-331; 356-368 AND 404-413</scope>
    <scope>TISSUE SPECIFICITY</scope>
    <scope>SUBCELLULAR LOCATION</scope>
    <source>
        <tissue>Testis</tissue>
    </source>
</reference>
<reference key="2">
    <citation type="journal article" date="2002" name="Mol. Hum. Reprod.">
        <title>Cloning and characterization of the human tektin-t gene.</title>
        <authorList>
            <person name="Iguchi N."/>
            <person name="Tanaka H."/>
            <person name="Nakamura Y."/>
            <person name="Nozaki M."/>
            <person name="Fujiwara T."/>
            <person name="Nishimune Y."/>
        </authorList>
    </citation>
    <scope>NUCLEOTIDE SEQUENCE [MRNA]</scope>
    <scope>SUBCELLULAR LOCATION</scope>
    <source>
        <tissue>Testis</tissue>
    </source>
</reference>
<reference key="3">
    <citation type="journal article" date="2006" name="Nature">
        <title>The DNA sequence and biological annotation of human chromosome 1.</title>
        <authorList>
            <person name="Gregory S.G."/>
            <person name="Barlow K.F."/>
            <person name="McLay K.E."/>
            <person name="Kaul R."/>
            <person name="Swarbreck D."/>
            <person name="Dunham A."/>
            <person name="Scott C.E."/>
            <person name="Howe K.L."/>
            <person name="Woodfine K."/>
            <person name="Spencer C.C.A."/>
            <person name="Jones M.C."/>
            <person name="Gillson C."/>
            <person name="Searle S."/>
            <person name="Zhou Y."/>
            <person name="Kokocinski F."/>
            <person name="McDonald L."/>
            <person name="Evans R."/>
            <person name="Phillips K."/>
            <person name="Atkinson A."/>
            <person name="Cooper R."/>
            <person name="Jones C."/>
            <person name="Hall R.E."/>
            <person name="Andrews T.D."/>
            <person name="Lloyd C."/>
            <person name="Ainscough R."/>
            <person name="Almeida J.P."/>
            <person name="Ambrose K.D."/>
            <person name="Anderson F."/>
            <person name="Andrew R.W."/>
            <person name="Ashwell R.I.S."/>
            <person name="Aubin K."/>
            <person name="Babbage A.K."/>
            <person name="Bagguley C.L."/>
            <person name="Bailey J."/>
            <person name="Beasley H."/>
            <person name="Bethel G."/>
            <person name="Bird C.P."/>
            <person name="Bray-Allen S."/>
            <person name="Brown J.Y."/>
            <person name="Brown A.J."/>
            <person name="Buckley D."/>
            <person name="Burton J."/>
            <person name="Bye J."/>
            <person name="Carder C."/>
            <person name="Chapman J.C."/>
            <person name="Clark S.Y."/>
            <person name="Clarke G."/>
            <person name="Clee C."/>
            <person name="Cobley V."/>
            <person name="Collier R.E."/>
            <person name="Corby N."/>
            <person name="Coville G.J."/>
            <person name="Davies J."/>
            <person name="Deadman R."/>
            <person name="Dunn M."/>
            <person name="Earthrowl M."/>
            <person name="Ellington A.G."/>
            <person name="Errington H."/>
            <person name="Frankish A."/>
            <person name="Frankland J."/>
            <person name="French L."/>
            <person name="Garner P."/>
            <person name="Garnett J."/>
            <person name="Gay L."/>
            <person name="Ghori M.R.J."/>
            <person name="Gibson R."/>
            <person name="Gilby L.M."/>
            <person name="Gillett W."/>
            <person name="Glithero R.J."/>
            <person name="Grafham D.V."/>
            <person name="Griffiths C."/>
            <person name="Griffiths-Jones S."/>
            <person name="Grocock R."/>
            <person name="Hammond S."/>
            <person name="Harrison E.S.I."/>
            <person name="Hart E."/>
            <person name="Haugen E."/>
            <person name="Heath P.D."/>
            <person name="Holmes S."/>
            <person name="Holt K."/>
            <person name="Howden P.J."/>
            <person name="Hunt A.R."/>
            <person name="Hunt S.E."/>
            <person name="Hunter G."/>
            <person name="Isherwood J."/>
            <person name="James R."/>
            <person name="Johnson C."/>
            <person name="Johnson D."/>
            <person name="Joy A."/>
            <person name="Kay M."/>
            <person name="Kershaw J.K."/>
            <person name="Kibukawa M."/>
            <person name="Kimberley A.M."/>
            <person name="King A."/>
            <person name="Knights A.J."/>
            <person name="Lad H."/>
            <person name="Laird G."/>
            <person name="Lawlor S."/>
            <person name="Leongamornlert D.A."/>
            <person name="Lloyd D.M."/>
            <person name="Loveland J."/>
            <person name="Lovell J."/>
            <person name="Lush M.J."/>
            <person name="Lyne R."/>
            <person name="Martin S."/>
            <person name="Mashreghi-Mohammadi M."/>
            <person name="Matthews L."/>
            <person name="Matthews N.S.W."/>
            <person name="McLaren S."/>
            <person name="Milne S."/>
            <person name="Mistry S."/>
            <person name="Moore M.J.F."/>
            <person name="Nickerson T."/>
            <person name="O'Dell C.N."/>
            <person name="Oliver K."/>
            <person name="Palmeiri A."/>
            <person name="Palmer S.A."/>
            <person name="Parker A."/>
            <person name="Patel D."/>
            <person name="Pearce A.V."/>
            <person name="Peck A.I."/>
            <person name="Pelan S."/>
            <person name="Phelps K."/>
            <person name="Phillimore B.J."/>
            <person name="Plumb R."/>
            <person name="Rajan J."/>
            <person name="Raymond C."/>
            <person name="Rouse G."/>
            <person name="Saenphimmachak C."/>
            <person name="Sehra H.K."/>
            <person name="Sheridan E."/>
            <person name="Shownkeen R."/>
            <person name="Sims S."/>
            <person name="Skuce C.D."/>
            <person name="Smith M."/>
            <person name="Steward C."/>
            <person name="Subramanian S."/>
            <person name="Sycamore N."/>
            <person name="Tracey A."/>
            <person name="Tromans A."/>
            <person name="Van Helmond Z."/>
            <person name="Wall M."/>
            <person name="Wallis J.M."/>
            <person name="White S."/>
            <person name="Whitehead S.L."/>
            <person name="Wilkinson J.E."/>
            <person name="Willey D.L."/>
            <person name="Williams H."/>
            <person name="Wilming L."/>
            <person name="Wray P.W."/>
            <person name="Wu Z."/>
            <person name="Coulson A."/>
            <person name="Vaudin M."/>
            <person name="Sulston J.E."/>
            <person name="Durbin R.M."/>
            <person name="Hubbard T."/>
            <person name="Wooster R."/>
            <person name="Dunham I."/>
            <person name="Carter N.P."/>
            <person name="McVean G."/>
            <person name="Ross M.T."/>
            <person name="Harrow J."/>
            <person name="Olson M.V."/>
            <person name="Beck S."/>
            <person name="Rogers J."/>
            <person name="Bentley D.R."/>
        </authorList>
    </citation>
    <scope>NUCLEOTIDE SEQUENCE [LARGE SCALE GENOMIC DNA]</scope>
</reference>
<reference key="4">
    <citation type="submission" date="2005-09" db="EMBL/GenBank/DDBJ databases">
        <authorList>
            <person name="Mural R.J."/>
            <person name="Istrail S."/>
            <person name="Sutton G.G."/>
            <person name="Florea L."/>
            <person name="Halpern A.L."/>
            <person name="Mobarry C.M."/>
            <person name="Lippert R."/>
            <person name="Walenz B."/>
            <person name="Shatkay H."/>
            <person name="Dew I."/>
            <person name="Miller J.R."/>
            <person name="Flanigan M.J."/>
            <person name="Edwards N.J."/>
            <person name="Bolanos R."/>
            <person name="Fasulo D."/>
            <person name="Halldorsson B.V."/>
            <person name="Hannenhalli S."/>
            <person name="Turner R."/>
            <person name="Yooseph S."/>
            <person name="Lu F."/>
            <person name="Nusskern D.R."/>
            <person name="Shue B.C."/>
            <person name="Zheng X.H."/>
            <person name="Zhong F."/>
            <person name="Delcher A.L."/>
            <person name="Huson D.H."/>
            <person name="Kravitz S.A."/>
            <person name="Mouchard L."/>
            <person name="Reinert K."/>
            <person name="Remington K.A."/>
            <person name="Clark A.G."/>
            <person name="Waterman M.S."/>
            <person name="Eichler E.E."/>
            <person name="Adams M.D."/>
            <person name="Hunkapiller M.W."/>
            <person name="Myers E.W."/>
            <person name="Venter J.C."/>
        </authorList>
    </citation>
    <scope>NUCLEOTIDE SEQUENCE [LARGE SCALE GENOMIC DNA]</scope>
</reference>
<reference key="5">
    <citation type="journal article" date="2004" name="Genome Res.">
        <title>The status, quality, and expansion of the NIH full-length cDNA project: the Mammalian Gene Collection (MGC).</title>
        <authorList>
            <consortium name="The MGC Project Team"/>
        </authorList>
    </citation>
    <scope>NUCLEOTIDE SEQUENCE [LARGE SCALE MRNA]</scope>
    <source>
        <tissue>Brain</tissue>
    </source>
</reference>
<reference evidence="8" key="6">
    <citation type="journal article" date="2022" name="Proc. Natl. Acad. Sci. U.S.A.">
        <title>SPACA9 is a lumenal protein of human ciliary singlet and doublet microtubules.</title>
        <authorList>
            <person name="Gui M."/>
            <person name="Croft J.T."/>
            <person name="Zabeo D."/>
            <person name="Acharya V."/>
            <person name="Kollman J.M."/>
            <person name="Burgoyne T."/>
            <person name="Hoog J.L."/>
            <person name="Brown A."/>
        </authorList>
    </citation>
    <scope>STRUCTURE BY ELECTRON MICROSCOPY (3.60 ANGSTROMS)</scope>
    <scope>FUNCTION</scope>
    <scope>SUBCELLULAR LOCATION</scope>
    <scope>TISSUE SPECIFICITY</scope>
</reference>
<feature type="chain" id="PRO_0000184565" description="Tektin-2">
    <location>
        <begin position="1"/>
        <end position="430"/>
    </location>
</feature>
<feature type="coiled-coil region" evidence="3">
    <location>
        <begin position="80"/>
        <end position="162"/>
    </location>
</feature>
<feature type="coiled-coil region" evidence="3">
    <location>
        <begin position="225"/>
        <end position="382"/>
    </location>
</feature>
<feature type="sequence variant" id="VAR_034549" description="In dbSNP:rs12043423.">
    <original>R</original>
    <variation>C</variation>
    <location>
        <position position="46"/>
    </location>
</feature>
<feature type="sequence variant" id="VAR_053720" description="In dbSNP:rs419653.">
    <original>I</original>
    <variation>T</variation>
    <location>
        <position position="114"/>
    </location>
</feature>
<feature type="sequence conflict" description="In Ref. 1; AAC09343." evidence="6" ref="1">
    <original>L</original>
    <variation>F</variation>
    <location>
        <position position="329"/>
    </location>
</feature>
<name>TEKT2_HUMAN</name>
<proteinExistence type="evidence at protein level"/>
<protein>
    <recommendedName>
        <fullName>Tektin-2</fullName>
    </recommendedName>
    <alternativeName>
        <fullName>Tektin-t</fullName>
    </alternativeName>
    <alternativeName>
        <fullName>Testicular tektin</fullName>
    </alternativeName>
    <alternativeName>
        <fullName>Testicular tektin B1-like protein</fullName>
        <shortName>TEKTB1</shortName>
        <shortName>Tektin-B1</shortName>
    </alternativeName>
</protein>
<comment type="function">
    <text evidence="2 5">Microtubule inner protein (MIP) part of the dynein-decorated doublet microtubules (DMTs) in cilia and flagellar axoneme (PubMed:36191189). Plays a key role in the assembly or attachment of the inner dynein arm to microtubules in sperm flagella and tracheal cilia. Forms filamentous polymers in the walls of ciliary and flagellar microtubules.</text>
</comment>
<comment type="subunit">
    <text evidence="2">Microtubule inner protein component of sperm flagellar doublet microtubules (By similarity). May interact with CCDC172 (By similarity).</text>
</comment>
<comment type="subcellular location">
    <subcellularLocation>
        <location evidence="5">Cytoplasm</location>
        <location evidence="5">Cytoskeleton</location>
        <location evidence="5">Cilium axoneme</location>
    </subcellularLocation>
    <subcellularLocation>
        <location evidence="2">Cytoplasm</location>
        <location evidence="2">Cytoskeleton</location>
        <location evidence="2">Flagellum axoneme</location>
    </subcellularLocation>
    <subcellularLocation>
        <location evidence="2">Cytoplasm</location>
        <location evidence="2">Cytoskeleton</location>
        <location evidence="2">Microtubule organizing center</location>
    </subcellularLocation>
    <text evidence="2">Colocalized with CCDC172 at the perinuclear region.</text>
</comment>
<comment type="tissue specificity">
    <text evidence="4 5">Expressed at high levels in testis, trachea and fetal lung, and at lower levels in ovary, pituitary, adult lung, fetal brain and fetal kidney.</text>
</comment>
<comment type="PTM">
    <text evidence="1">Tyrosine phosphorylated.</text>
</comment>
<comment type="PTM">
    <text evidence="2">Ubiquitinated, leading to its degradation. Deubiquitinated by USP16, promoting its stability.</text>
</comment>
<comment type="similarity">
    <text evidence="6">Belongs to the tektin family.</text>
</comment>
<gene>
    <name evidence="7" type="primary">TEKT2</name>
</gene>